<gene>
    <name evidence="1" type="primary">atpA</name>
    <name type="ordered locus">ROP_11840</name>
</gene>
<name>ATPA_RHOOB</name>
<comment type="function">
    <text evidence="1">Produces ATP from ADP in the presence of a proton gradient across the membrane. The alpha chain is a regulatory subunit.</text>
</comment>
<comment type="catalytic activity">
    <reaction evidence="1">
        <text>ATP + H2O + 4 H(+)(in) = ADP + phosphate + 5 H(+)(out)</text>
        <dbReference type="Rhea" id="RHEA:57720"/>
        <dbReference type="ChEBI" id="CHEBI:15377"/>
        <dbReference type="ChEBI" id="CHEBI:15378"/>
        <dbReference type="ChEBI" id="CHEBI:30616"/>
        <dbReference type="ChEBI" id="CHEBI:43474"/>
        <dbReference type="ChEBI" id="CHEBI:456216"/>
        <dbReference type="EC" id="7.1.2.2"/>
    </reaction>
</comment>
<comment type="subunit">
    <text evidence="1">F-type ATPases have 2 components, CF(1) - the catalytic core - and CF(0) - the membrane proton channel. CF(1) has five subunits: alpha(3), beta(3), gamma(1), delta(1), epsilon(1). CF(0) has three main subunits: a(1), b(2) and c(9-12). The alpha and beta chains form an alternating ring which encloses part of the gamma chain. CF(1) is attached to CF(0) by a central stalk formed by the gamma and epsilon chains, while a peripheral stalk is formed by the delta and b chains.</text>
</comment>
<comment type="subcellular location">
    <subcellularLocation>
        <location evidence="1">Cell membrane</location>
        <topology evidence="1">Peripheral membrane protein</topology>
    </subcellularLocation>
</comment>
<comment type="similarity">
    <text evidence="1">Belongs to the ATPase alpha/beta chains family.</text>
</comment>
<organism>
    <name type="scientific">Rhodococcus opacus (strain B4)</name>
    <dbReference type="NCBI Taxonomy" id="632772"/>
    <lineage>
        <taxon>Bacteria</taxon>
        <taxon>Bacillati</taxon>
        <taxon>Actinomycetota</taxon>
        <taxon>Actinomycetes</taxon>
        <taxon>Mycobacteriales</taxon>
        <taxon>Nocardiaceae</taxon>
        <taxon>Rhodococcus</taxon>
    </lineage>
</organism>
<accession>C1AW01</accession>
<feature type="chain" id="PRO_1000166551" description="ATP synthase subunit alpha">
    <location>
        <begin position="1"/>
        <end position="547"/>
    </location>
</feature>
<feature type="binding site" evidence="1">
    <location>
        <begin position="172"/>
        <end position="179"/>
    </location>
    <ligand>
        <name>ATP</name>
        <dbReference type="ChEBI" id="CHEBI:30616"/>
    </ligand>
</feature>
<feature type="site" description="Required for activity" evidence="1">
    <location>
        <position position="373"/>
    </location>
</feature>
<reference key="1">
    <citation type="submission" date="2009-03" db="EMBL/GenBank/DDBJ databases">
        <title>Comparison of the complete genome sequences of Rhodococcus erythropolis PR4 and Rhodococcus opacus B4.</title>
        <authorList>
            <person name="Takarada H."/>
            <person name="Sekine M."/>
            <person name="Hosoyama A."/>
            <person name="Yamada R."/>
            <person name="Fujisawa T."/>
            <person name="Omata S."/>
            <person name="Shimizu A."/>
            <person name="Tsukatani N."/>
            <person name="Tanikawa S."/>
            <person name="Fujita N."/>
            <person name="Harayama S."/>
        </authorList>
    </citation>
    <scope>NUCLEOTIDE SEQUENCE [LARGE SCALE GENOMIC DNA]</scope>
    <source>
        <strain>B4</strain>
    </source>
</reference>
<evidence type="ECO:0000255" key="1">
    <source>
        <dbReference type="HAMAP-Rule" id="MF_01346"/>
    </source>
</evidence>
<proteinExistence type="inferred from homology"/>
<protein>
    <recommendedName>
        <fullName evidence="1">ATP synthase subunit alpha</fullName>
        <ecNumber evidence="1">7.1.2.2</ecNumber>
    </recommendedName>
    <alternativeName>
        <fullName evidence="1">ATP synthase F1 sector subunit alpha</fullName>
    </alternativeName>
    <alternativeName>
        <fullName evidence="1">F-ATPase subunit alpha</fullName>
    </alternativeName>
</protein>
<sequence length="547" mass="58417">MAELTISSDEIRSAIENYTASYSPEASREEVGVVTDTSDGIAHVSGLPSAMANELLEFPGGILGVALNLDATEIGAVILGDYENIQEGQEVKRTGDVLSVPVGDAFLGRVINPLGQPIDGLGEIASDETRALELQAASVLERQPVEEPLQTGIKAIDAMTPIGRGQRQLVIGDRKTGKTAVCIDAILNQKANWETGDEKQQVRCIYVAIGQKGSTIAGVKAALEEQGAMEYTTIVAAPASDSAGFKWLAPYTGSAIGQHWMYQGKHVLVVFDDLTKQAEAYRAISLLLRRPPGREAYPGDVFYLHSRLLERSAKLSDALGGGSLTALPIIETKANDVSAYIPTNVISITDGQVFLESDLFNKGVRPAINVGISVSRVGGAAQTKGMKKVSGSLRLELAQFRELEAFSAFASDLDAASKAQLERGARLVELLKQDQYSPIPVEDQIVSIYLAGEGVFDSVPVGDVRRFEAELLDELHRTASGVYESIKGGKALDADNAKALVEATDKFKETFLASDGSRVVNEAEAEALDAGEVGHEQINVKRTTVSK</sequence>
<dbReference type="EC" id="7.1.2.2" evidence="1"/>
<dbReference type="EMBL" id="AP011115">
    <property type="protein sequence ID" value="BAH49431.1"/>
    <property type="molecule type" value="Genomic_DNA"/>
</dbReference>
<dbReference type="RefSeq" id="WP_012688409.1">
    <property type="nucleotide sequence ID" value="NC_012522.1"/>
</dbReference>
<dbReference type="SMR" id="C1AW01"/>
<dbReference type="STRING" id="632772.ROP_11840"/>
<dbReference type="KEGG" id="rop:ROP_11840"/>
<dbReference type="PATRIC" id="fig|632772.20.peg.1254"/>
<dbReference type="HOGENOM" id="CLU_010091_2_1_11"/>
<dbReference type="OrthoDB" id="9803053at2"/>
<dbReference type="Proteomes" id="UP000002212">
    <property type="component" value="Chromosome"/>
</dbReference>
<dbReference type="GO" id="GO:0005886">
    <property type="term" value="C:plasma membrane"/>
    <property type="evidence" value="ECO:0007669"/>
    <property type="project" value="UniProtKB-SubCell"/>
</dbReference>
<dbReference type="GO" id="GO:0045259">
    <property type="term" value="C:proton-transporting ATP synthase complex"/>
    <property type="evidence" value="ECO:0007669"/>
    <property type="project" value="UniProtKB-KW"/>
</dbReference>
<dbReference type="GO" id="GO:0043531">
    <property type="term" value="F:ADP binding"/>
    <property type="evidence" value="ECO:0007669"/>
    <property type="project" value="TreeGrafter"/>
</dbReference>
<dbReference type="GO" id="GO:0005524">
    <property type="term" value="F:ATP binding"/>
    <property type="evidence" value="ECO:0007669"/>
    <property type="project" value="UniProtKB-UniRule"/>
</dbReference>
<dbReference type="GO" id="GO:0046933">
    <property type="term" value="F:proton-transporting ATP synthase activity, rotational mechanism"/>
    <property type="evidence" value="ECO:0007669"/>
    <property type="project" value="UniProtKB-UniRule"/>
</dbReference>
<dbReference type="CDD" id="cd18113">
    <property type="entry name" value="ATP-synt_F1_alpha_C"/>
    <property type="match status" value="1"/>
</dbReference>
<dbReference type="CDD" id="cd18116">
    <property type="entry name" value="ATP-synt_F1_alpha_N"/>
    <property type="match status" value="1"/>
</dbReference>
<dbReference type="CDD" id="cd01132">
    <property type="entry name" value="F1-ATPase_alpha_CD"/>
    <property type="match status" value="1"/>
</dbReference>
<dbReference type="FunFam" id="1.20.150.20:FF:000001">
    <property type="entry name" value="ATP synthase subunit alpha"/>
    <property type="match status" value="1"/>
</dbReference>
<dbReference type="FunFam" id="3.40.50.300:FF:000002">
    <property type="entry name" value="ATP synthase subunit alpha"/>
    <property type="match status" value="1"/>
</dbReference>
<dbReference type="Gene3D" id="2.40.30.20">
    <property type="match status" value="1"/>
</dbReference>
<dbReference type="Gene3D" id="1.20.150.20">
    <property type="entry name" value="ATP synthase alpha/beta chain, C-terminal domain"/>
    <property type="match status" value="1"/>
</dbReference>
<dbReference type="Gene3D" id="3.40.50.300">
    <property type="entry name" value="P-loop containing nucleotide triphosphate hydrolases"/>
    <property type="match status" value="1"/>
</dbReference>
<dbReference type="HAMAP" id="MF_01346">
    <property type="entry name" value="ATP_synth_alpha_bact"/>
    <property type="match status" value="1"/>
</dbReference>
<dbReference type="InterPro" id="IPR023366">
    <property type="entry name" value="ATP_synth_asu-like_sf"/>
</dbReference>
<dbReference type="InterPro" id="IPR000793">
    <property type="entry name" value="ATP_synth_asu_C"/>
</dbReference>
<dbReference type="InterPro" id="IPR038376">
    <property type="entry name" value="ATP_synth_asu_C_sf"/>
</dbReference>
<dbReference type="InterPro" id="IPR033732">
    <property type="entry name" value="ATP_synth_F1_a_nt-bd_dom"/>
</dbReference>
<dbReference type="InterPro" id="IPR005294">
    <property type="entry name" value="ATP_synth_F1_asu"/>
</dbReference>
<dbReference type="InterPro" id="IPR020003">
    <property type="entry name" value="ATPase_a/bsu_AS"/>
</dbReference>
<dbReference type="InterPro" id="IPR004100">
    <property type="entry name" value="ATPase_F1/V1/A1_a/bsu_N"/>
</dbReference>
<dbReference type="InterPro" id="IPR036121">
    <property type="entry name" value="ATPase_F1/V1/A1_a/bsu_N_sf"/>
</dbReference>
<dbReference type="InterPro" id="IPR000194">
    <property type="entry name" value="ATPase_F1/V1/A1_a/bsu_nucl-bd"/>
</dbReference>
<dbReference type="InterPro" id="IPR027417">
    <property type="entry name" value="P-loop_NTPase"/>
</dbReference>
<dbReference type="NCBIfam" id="TIGR00962">
    <property type="entry name" value="atpA"/>
    <property type="match status" value="1"/>
</dbReference>
<dbReference type="NCBIfam" id="NF009884">
    <property type="entry name" value="PRK13343.1"/>
    <property type="match status" value="1"/>
</dbReference>
<dbReference type="PANTHER" id="PTHR48082">
    <property type="entry name" value="ATP SYNTHASE SUBUNIT ALPHA, MITOCHONDRIAL"/>
    <property type="match status" value="1"/>
</dbReference>
<dbReference type="PANTHER" id="PTHR48082:SF2">
    <property type="entry name" value="ATP SYNTHASE SUBUNIT ALPHA, MITOCHONDRIAL"/>
    <property type="match status" value="1"/>
</dbReference>
<dbReference type="Pfam" id="PF00006">
    <property type="entry name" value="ATP-synt_ab"/>
    <property type="match status" value="1"/>
</dbReference>
<dbReference type="Pfam" id="PF00306">
    <property type="entry name" value="ATP-synt_ab_C"/>
    <property type="match status" value="1"/>
</dbReference>
<dbReference type="Pfam" id="PF02874">
    <property type="entry name" value="ATP-synt_ab_N"/>
    <property type="match status" value="1"/>
</dbReference>
<dbReference type="SUPFAM" id="SSF47917">
    <property type="entry name" value="C-terminal domain of alpha and beta subunits of F1 ATP synthase"/>
    <property type="match status" value="1"/>
</dbReference>
<dbReference type="SUPFAM" id="SSF50615">
    <property type="entry name" value="N-terminal domain of alpha and beta subunits of F1 ATP synthase"/>
    <property type="match status" value="1"/>
</dbReference>
<dbReference type="SUPFAM" id="SSF52540">
    <property type="entry name" value="P-loop containing nucleoside triphosphate hydrolases"/>
    <property type="match status" value="1"/>
</dbReference>
<dbReference type="PROSITE" id="PS00152">
    <property type="entry name" value="ATPASE_ALPHA_BETA"/>
    <property type="match status" value="1"/>
</dbReference>
<keyword id="KW-0066">ATP synthesis</keyword>
<keyword id="KW-0067">ATP-binding</keyword>
<keyword id="KW-1003">Cell membrane</keyword>
<keyword id="KW-0139">CF(1)</keyword>
<keyword id="KW-0375">Hydrogen ion transport</keyword>
<keyword id="KW-0406">Ion transport</keyword>
<keyword id="KW-0472">Membrane</keyword>
<keyword id="KW-0547">Nucleotide-binding</keyword>
<keyword id="KW-1278">Translocase</keyword>
<keyword id="KW-0813">Transport</keyword>